<proteinExistence type="inferred from homology"/>
<accession>Q5HNI5</accession>
<protein>
    <recommendedName>
        <fullName evidence="1">Small ribosomal subunit protein uS4</fullName>
    </recommendedName>
    <alternativeName>
        <fullName evidence="2">30S ribosomal protein S4</fullName>
    </alternativeName>
</protein>
<gene>
    <name evidence="1" type="primary">rpsD</name>
    <name type="ordered locus">SERP1284</name>
</gene>
<evidence type="ECO:0000255" key="1">
    <source>
        <dbReference type="HAMAP-Rule" id="MF_01306"/>
    </source>
</evidence>
<evidence type="ECO:0000305" key="2"/>
<feature type="chain" id="PRO_0000132463" description="Small ribosomal subunit protein uS4">
    <location>
        <begin position="1"/>
        <end position="200"/>
    </location>
</feature>
<feature type="domain" description="S4 RNA-binding" evidence="1">
    <location>
        <begin position="92"/>
        <end position="155"/>
    </location>
</feature>
<keyword id="KW-1185">Reference proteome</keyword>
<keyword id="KW-0687">Ribonucleoprotein</keyword>
<keyword id="KW-0689">Ribosomal protein</keyword>
<keyword id="KW-0694">RNA-binding</keyword>
<keyword id="KW-0699">rRNA-binding</keyword>
<organism>
    <name type="scientific">Staphylococcus epidermidis (strain ATCC 35984 / DSM 28319 / BCRC 17069 / CCUG 31568 / BM 3577 / RP62A)</name>
    <dbReference type="NCBI Taxonomy" id="176279"/>
    <lineage>
        <taxon>Bacteria</taxon>
        <taxon>Bacillati</taxon>
        <taxon>Bacillota</taxon>
        <taxon>Bacilli</taxon>
        <taxon>Bacillales</taxon>
        <taxon>Staphylococcaceae</taxon>
        <taxon>Staphylococcus</taxon>
    </lineage>
</organism>
<dbReference type="EMBL" id="CP000029">
    <property type="protein sequence ID" value="AAW54687.1"/>
    <property type="molecule type" value="Genomic_DNA"/>
</dbReference>
<dbReference type="RefSeq" id="WP_001830798.1">
    <property type="nucleotide sequence ID" value="NC_002976.3"/>
</dbReference>
<dbReference type="SMR" id="Q5HNI5"/>
<dbReference type="STRING" id="176279.SERP1284"/>
<dbReference type="GeneID" id="50018492"/>
<dbReference type="KEGG" id="ser:SERP1284"/>
<dbReference type="eggNOG" id="COG0522">
    <property type="taxonomic scope" value="Bacteria"/>
</dbReference>
<dbReference type="HOGENOM" id="CLU_092403_0_1_9"/>
<dbReference type="Proteomes" id="UP000000531">
    <property type="component" value="Chromosome"/>
</dbReference>
<dbReference type="GO" id="GO:0015935">
    <property type="term" value="C:small ribosomal subunit"/>
    <property type="evidence" value="ECO:0007669"/>
    <property type="project" value="InterPro"/>
</dbReference>
<dbReference type="GO" id="GO:0019843">
    <property type="term" value="F:rRNA binding"/>
    <property type="evidence" value="ECO:0007669"/>
    <property type="project" value="UniProtKB-UniRule"/>
</dbReference>
<dbReference type="GO" id="GO:0003735">
    <property type="term" value="F:structural constituent of ribosome"/>
    <property type="evidence" value="ECO:0007669"/>
    <property type="project" value="InterPro"/>
</dbReference>
<dbReference type="GO" id="GO:0042274">
    <property type="term" value="P:ribosomal small subunit biogenesis"/>
    <property type="evidence" value="ECO:0007669"/>
    <property type="project" value="TreeGrafter"/>
</dbReference>
<dbReference type="GO" id="GO:0006412">
    <property type="term" value="P:translation"/>
    <property type="evidence" value="ECO:0007669"/>
    <property type="project" value="UniProtKB-UniRule"/>
</dbReference>
<dbReference type="CDD" id="cd00165">
    <property type="entry name" value="S4"/>
    <property type="match status" value="1"/>
</dbReference>
<dbReference type="FunFam" id="1.10.1050.10:FF:000001">
    <property type="entry name" value="30S ribosomal protein S4"/>
    <property type="match status" value="1"/>
</dbReference>
<dbReference type="FunFam" id="3.10.290.10:FF:000001">
    <property type="entry name" value="30S ribosomal protein S4"/>
    <property type="match status" value="1"/>
</dbReference>
<dbReference type="Gene3D" id="1.10.1050.10">
    <property type="entry name" value="Ribosomal Protein S4 Delta 41, Chain A, domain 1"/>
    <property type="match status" value="1"/>
</dbReference>
<dbReference type="Gene3D" id="3.10.290.10">
    <property type="entry name" value="RNA-binding S4 domain"/>
    <property type="match status" value="1"/>
</dbReference>
<dbReference type="HAMAP" id="MF_01306_B">
    <property type="entry name" value="Ribosomal_uS4_B"/>
    <property type="match status" value="1"/>
</dbReference>
<dbReference type="InterPro" id="IPR022801">
    <property type="entry name" value="Ribosomal_uS4"/>
</dbReference>
<dbReference type="InterPro" id="IPR005709">
    <property type="entry name" value="Ribosomal_uS4_bac-type"/>
</dbReference>
<dbReference type="InterPro" id="IPR018079">
    <property type="entry name" value="Ribosomal_uS4_CS"/>
</dbReference>
<dbReference type="InterPro" id="IPR001912">
    <property type="entry name" value="Ribosomal_uS4_N"/>
</dbReference>
<dbReference type="InterPro" id="IPR002942">
    <property type="entry name" value="S4_RNA-bd"/>
</dbReference>
<dbReference type="InterPro" id="IPR036986">
    <property type="entry name" value="S4_RNA-bd_sf"/>
</dbReference>
<dbReference type="NCBIfam" id="NF003717">
    <property type="entry name" value="PRK05327.1"/>
    <property type="match status" value="1"/>
</dbReference>
<dbReference type="NCBIfam" id="TIGR01017">
    <property type="entry name" value="rpsD_bact"/>
    <property type="match status" value="1"/>
</dbReference>
<dbReference type="PANTHER" id="PTHR11831">
    <property type="entry name" value="30S 40S RIBOSOMAL PROTEIN"/>
    <property type="match status" value="1"/>
</dbReference>
<dbReference type="PANTHER" id="PTHR11831:SF4">
    <property type="entry name" value="SMALL RIBOSOMAL SUBUNIT PROTEIN US4M"/>
    <property type="match status" value="1"/>
</dbReference>
<dbReference type="Pfam" id="PF00163">
    <property type="entry name" value="Ribosomal_S4"/>
    <property type="match status" value="1"/>
</dbReference>
<dbReference type="Pfam" id="PF01479">
    <property type="entry name" value="S4"/>
    <property type="match status" value="1"/>
</dbReference>
<dbReference type="SMART" id="SM01390">
    <property type="entry name" value="Ribosomal_S4"/>
    <property type="match status" value="1"/>
</dbReference>
<dbReference type="SMART" id="SM00363">
    <property type="entry name" value="S4"/>
    <property type="match status" value="1"/>
</dbReference>
<dbReference type="SUPFAM" id="SSF55174">
    <property type="entry name" value="Alpha-L RNA-binding motif"/>
    <property type="match status" value="1"/>
</dbReference>
<dbReference type="PROSITE" id="PS00632">
    <property type="entry name" value="RIBOSOMAL_S4"/>
    <property type="match status" value="1"/>
</dbReference>
<dbReference type="PROSITE" id="PS50889">
    <property type="entry name" value="S4"/>
    <property type="match status" value="1"/>
</dbReference>
<comment type="function">
    <text evidence="1">One of the primary rRNA binding proteins, it binds directly to 16S rRNA where it nucleates assembly of the body of the 30S subunit.</text>
</comment>
<comment type="function">
    <text evidence="1">With S5 and S12 plays an important role in translational accuracy.</text>
</comment>
<comment type="subunit">
    <text evidence="1">Part of the 30S ribosomal subunit. Contacts protein S5. The interaction surface between S4 and S5 is involved in control of translational fidelity.</text>
</comment>
<comment type="similarity">
    <text evidence="1">Belongs to the universal ribosomal protein uS4 family.</text>
</comment>
<reference key="1">
    <citation type="journal article" date="2005" name="J. Bacteriol.">
        <title>Insights on evolution of virulence and resistance from the complete genome analysis of an early methicillin-resistant Staphylococcus aureus strain and a biofilm-producing methicillin-resistant Staphylococcus epidermidis strain.</title>
        <authorList>
            <person name="Gill S.R."/>
            <person name="Fouts D.E."/>
            <person name="Archer G.L."/>
            <person name="Mongodin E.F."/>
            <person name="DeBoy R.T."/>
            <person name="Ravel J."/>
            <person name="Paulsen I.T."/>
            <person name="Kolonay J.F."/>
            <person name="Brinkac L.M."/>
            <person name="Beanan M.J."/>
            <person name="Dodson R.J."/>
            <person name="Daugherty S.C."/>
            <person name="Madupu R."/>
            <person name="Angiuoli S.V."/>
            <person name="Durkin A.S."/>
            <person name="Haft D.H."/>
            <person name="Vamathevan J.J."/>
            <person name="Khouri H."/>
            <person name="Utterback T.R."/>
            <person name="Lee C."/>
            <person name="Dimitrov G."/>
            <person name="Jiang L."/>
            <person name="Qin H."/>
            <person name="Weidman J."/>
            <person name="Tran K."/>
            <person name="Kang K.H."/>
            <person name="Hance I.R."/>
            <person name="Nelson K.E."/>
            <person name="Fraser C.M."/>
        </authorList>
    </citation>
    <scope>NUCLEOTIDE SEQUENCE [LARGE SCALE GENOMIC DNA]</scope>
    <source>
        <strain>ATCC 35984 / DSM 28319 / BCRC 17069 / CCUG 31568 / BM 3577 / RP62A</strain>
    </source>
</reference>
<name>RS4_STAEQ</name>
<sequence length="200" mass="23105">MARFRGSNWKKSRRLGISLSGTGKELEKRPYAPGQHGPNQRKKLSEYGLQLREKQKLRYLYGMTERQFRNTFDIAGKQYGVHGENFMILLASRLDAVVYSLGLARTRRQARQLVNHGHIEVDGGRVDIPSYSLKPGQVITVREKSQNLDIIKESVEINNFVPEYLDFDADNLKGTFVRFPERSELPAEINEQLIVEYYSR</sequence>